<proteinExistence type="inferred from homology"/>
<sequence>MPRKSVQEREKKRLRLINKYFLRRSLLRKCVVDLKVSSEERWNAVLKLQTLPRDSSPSRLRNRCGRTGRPHAFLRKFGLSRMKVREAAMKGEIPGLRKSSW</sequence>
<organism>
    <name type="scientific">Blochmanniella floridana</name>
    <dbReference type="NCBI Taxonomy" id="203907"/>
    <lineage>
        <taxon>Bacteria</taxon>
        <taxon>Pseudomonadati</taxon>
        <taxon>Pseudomonadota</taxon>
        <taxon>Gammaproteobacteria</taxon>
        <taxon>Enterobacterales</taxon>
        <taxon>Enterobacteriaceae</taxon>
        <taxon>ant endosymbionts</taxon>
        <taxon>Candidatus Blochmanniella</taxon>
    </lineage>
</organism>
<accession>Q7VQD5</accession>
<evidence type="ECO:0000255" key="1">
    <source>
        <dbReference type="HAMAP-Rule" id="MF_00537"/>
    </source>
</evidence>
<evidence type="ECO:0000305" key="2"/>
<keyword id="KW-1185">Reference proteome</keyword>
<keyword id="KW-0687">Ribonucleoprotein</keyword>
<keyword id="KW-0689">Ribosomal protein</keyword>
<keyword id="KW-0694">RNA-binding</keyword>
<keyword id="KW-0699">rRNA-binding</keyword>
<gene>
    <name evidence="1" type="primary">rpsN</name>
    <name type="ordered locus">Bfl204</name>
</gene>
<protein>
    <recommendedName>
        <fullName evidence="1">Small ribosomal subunit protein uS14</fullName>
    </recommendedName>
    <alternativeName>
        <fullName evidence="2">30S ribosomal protein S14</fullName>
    </alternativeName>
</protein>
<comment type="function">
    <text evidence="1">Binds 16S rRNA, required for the assembly of 30S particles and may also be responsible for determining the conformation of the 16S rRNA at the A site.</text>
</comment>
<comment type="subunit">
    <text evidence="1">Part of the 30S ribosomal subunit. Contacts proteins S3 and S10.</text>
</comment>
<comment type="similarity">
    <text evidence="1">Belongs to the universal ribosomal protein uS14 family.</text>
</comment>
<feature type="chain" id="PRO_1000128311" description="Small ribosomal subunit protein uS14">
    <location>
        <begin position="1"/>
        <end position="101"/>
    </location>
</feature>
<reference key="1">
    <citation type="journal article" date="2003" name="Proc. Natl. Acad. Sci. U.S.A.">
        <title>The genome sequence of Blochmannia floridanus: comparative analysis of reduced genomes.</title>
        <authorList>
            <person name="Gil R."/>
            <person name="Silva F.J."/>
            <person name="Zientz E."/>
            <person name="Delmotte F."/>
            <person name="Gonzalez-Candelas F."/>
            <person name="Latorre A."/>
            <person name="Rausell C."/>
            <person name="Kamerbeek J."/>
            <person name="Gadau J."/>
            <person name="Hoelldobler B."/>
            <person name="van Ham R.C.H.J."/>
            <person name="Gross R."/>
            <person name="Moya A."/>
        </authorList>
    </citation>
    <scope>NUCLEOTIDE SEQUENCE [LARGE SCALE GENOMIC DNA]</scope>
</reference>
<name>RS14_BLOFL</name>
<dbReference type="EMBL" id="BX248583">
    <property type="protein sequence ID" value="CAD83719.1"/>
    <property type="molecule type" value="Genomic_DNA"/>
</dbReference>
<dbReference type="SMR" id="Q7VQD5"/>
<dbReference type="STRING" id="203907.Bfl204"/>
<dbReference type="KEGG" id="bfl:Bfl204"/>
<dbReference type="eggNOG" id="COG0199">
    <property type="taxonomic scope" value="Bacteria"/>
</dbReference>
<dbReference type="HOGENOM" id="CLU_139869_0_1_6"/>
<dbReference type="OrthoDB" id="9810484at2"/>
<dbReference type="Proteomes" id="UP000002192">
    <property type="component" value="Chromosome"/>
</dbReference>
<dbReference type="GO" id="GO:0005737">
    <property type="term" value="C:cytoplasm"/>
    <property type="evidence" value="ECO:0007669"/>
    <property type="project" value="UniProtKB-ARBA"/>
</dbReference>
<dbReference type="GO" id="GO:0015935">
    <property type="term" value="C:small ribosomal subunit"/>
    <property type="evidence" value="ECO:0007669"/>
    <property type="project" value="TreeGrafter"/>
</dbReference>
<dbReference type="GO" id="GO:0019843">
    <property type="term" value="F:rRNA binding"/>
    <property type="evidence" value="ECO:0007669"/>
    <property type="project" value="UniProtKB-UniRule"/>
</dbReference>
<dbReference type="GO" id="GO:0003735">
    <property type="term" value="F:structural constituent of ribosome"/>
    <property type="evidence" value="ECO:0007669"/>
    <property type="project" value="InterPro"/>
</dbReference>
<dbReference type="GO" id="GO:0006412">
    <property type="term" value="P:translation"/>
    <property type="evidence" value="ECO:0007669"/>
    <property type="project" value="UniProtKB-UniRule"/>
</dbReference>
<dbReference type="FunFam" id="1.10.287.1480:FF:000001">
    <property type="entry name" value="30S ribosomal protein S14"/>
    <property type="match status" value="1"/>
</dbReference>
<dbReference type="Gene3D" id="1.10.287.1480">
    <property type="match status" value="1"/>
</dbReference>
<dbReference type="HAMAP" id="MF_00537">
    <property type="entry name" value="Ribosomal_uS14_1"/>
    <property type="match status" value="1"/>
</dbReference>
<dbReference type="InterPro" id="IPR001209">
    <property type="entry name" value="Ribosomal_uS14"/>
</dbReference>
<dbReference type="InterPro" id="IPR023036">
    <property type="entry name" value="Ribosomal_uS14_bac/plastid"/>
</dbReference>
<dbReference type="InterPro" id="IPR018271">
    <property type="entry name" value="Ribosomal_uS14_CS"/>
</dbReference>
<dbReference type="NCBIfam" id="NF006477">
    <property type="entry name" value="PRK08881.1"/>
    <property type="match status" value="1"/>
</dbReference>
<dbReference type="PANTHER" id="PTHR19836">
    <property type="entry name" value="30S RIBOSOMAL PROTEIN S14"/>
    <property type="match status" value="1"/>
</dbReference>
<dbReference type="PANTHER" id="PTHR19836:SF19">
    <property type="entry name" value="SMALL RIBOSOMAL SUBUNIT PROTEIN US14M"/>
    <property type="match status" value="1"/>
</dbReference>
<dbReference type="Pfam" id="PF00253">
    <property type="entry name" value="Ribosomal_S14"/>
    <property type="match status" value="1"/>
</dbReference>
<dbReference type="SUPFAM" id="SSF57716">
    <property type="entry name" value="Glucocorticoid receptor-like (DNA-binding domain)"/>
    <property type="match status" value="1"/>
</dbReference>
<dbReference type="PROSITE" id="PS00527">
    <property type="entry name" value="RIBOSOMAL_S14"/>
    <property type="match status" value="1"/>
</dbReference>